<reference key="1">
    <citation type="journal article" date="2004" name="Nucleic Acids Res.">
        <title>Whole genome comparisons of serotype 4b and 1/2a strains of the food-borne pathogen Listeria monocytogenes reveal new insights into the core genome components of this species.</title>
        <authorList>
            <person name="Nelson K.E."/>
            <person name="Fouts D.E."/>
            <person name="Mongodin E.F."/>
            <person name="Ravel J."/>
            <person name="DeBoy R.T."/>
            <person name="Kolonay J.F."/>
            <person name="Rasko D.A."/>
            <person name="Angiuoli S.V."/>
            <person name="Gill S.R."/>
            <person name="Paulsen I.T."/>
            <person name="Peterson J.D."/>
            <person name="White O."/>
            <person name="Nelson W.C."/>
            <person name="Nierman W.C."/>
            <person name="Beanan M.J."/>
            <person name="Brinkac L.M."/>
            <person name="Daugherty S.C."/>
            <person name="Dodson R.J."/>
            <person name="Durkin A.S."/>
            <person name="Madupu R."/>
            <person name="Haft D.H."/>
            <person name="Selengut J."/>
            <person name="Van Aken S.E."/>
            <person name="Khouri H.M."/>
            <person name="Fedorova N."/>
            <person name="Forberger H.A."/>
            <person name="Tran B."/>
            <person name="Kathariou S."/>
            <person name="Wonderling L.D."/>
            <person name="Uhlich G.A."/>
            <person name="Bayles D.O."/>
            <person name="Luchansky J.B."/>
            <person name="Fraser C.M."/>
        </authorList>
    </citation>
    <scope>NUCLEOTIDE SEQUENCE [LARGE SCALE GENOMIC DNA]</scope>
    <source>
        <strain>F2365</strain>
    </source>
</reference>
<gene>
    <name evidence="1" type="primary">tpx</name>
    <name type="ordered locus">LMOf2365_1605</name>
</gene>
<name>TPX_LISMF</name>
<sequence length="165" mass="18091">MTQVTFKHNPVTLVGTERKVGDKAPNFTVVNRDLEEVTLHDYDGKVRLISVVPSIDTSVCSTQTRKFNEEASNLDNTVVLTISVDLPFAQKKWCAAEGLPNAITLSDHRDLSFGEAYGVVMKELRLLARSVFVVNAAGEIVYTEVVPEGSDHPNYEAAIEAAKKA</sequence>
<feature type="chain" id="PRO_0000187886" description="Thiol peroxidase">
    <location>
        <begin position="1"/>
        <end position="165"/>
    </location>
</feature>
<feature type="domain" description="Thioredoxin" evidence="1">
    <location>
        <begin position="18"/>
        <end position="164"/>
    </location>
</feature>
<feature type="active site" description="Cysteine sulfenic acid (-SOH) intermediate" evidence="1">
    <location>
        <position position="60"/>
    </location>
</feature>
<feature type="disulfide bond" description="Redox-active" evidence="1">
    <location>
        <begin position="60"/>
        <end position="94"/>
    </location>
</feature>
<keyword id="KW-0049">Antioxidant</keyword>
<keyword id="KW-1015">Disulfide bond</keyword>
<keyword id="KW-0560">Oxidoreductase</keyword>
<keyword id="KW-0575">Peroxidase</keyword>
<keyword id="KW-0676">Redox-active center</keyword>
<dbReference type="EC" id="1.11.1.24" evidence="1"/>
<dbReference type="EMBL" id="AE017262">
    <property type="protein sequence ID" value="AAT04380.1"/>
    <property type="molecule type" value="Genomic_DNA"/>
</dbReference>
<dbReference type="RefSeq" id="WP_003727378.1">
    <property type="nucleotide sequence ID" value="NC_002973.6"/>
</dbReference>
<dbReference type="SMR" id="Q71Z84"/>
<dbReference type="KEGG" id="lmf:LMOf2365_1605"/>
<dbReference type="HOGENOM" id="CLU_042529_12_0_9"/>
<dbReference type="GO" id="GO:0008379">
    <property type="term" value="F:thioredoxin peroxidase activity"/>
    <property type="evidence" value="ECO:0007669"/>
    <property type="project" value="UniProtKB-UniRule"/>
</dbReference>
<dbReference type="CDD" id="cd03014">
    <property type="entry name" value="PRX_Atyp2cys"/>
    <property type="match status" value="1"/>
</dbReference>
<dbReference type="Gene3D" id="3.40.30.10">
    <property type="entry name" value="Glutaredoxin"/>
    <property type="match status" value="1"/>
</dbReference>
<dbReference type="HAMAP" id="MF_00269">
    <property type="entry name" value="Tpx"/>
    <property type="match status" value="1"/>
</dbReference>
<dbReference type="InterPro" id="IPR013740">
    <property type="entry name" value="Redoxin"/>
</dbReference>
<dbReference type="InterPro" id="IPR036249">
    <property type="entry name" value="Thioredoxin-like_sf"/>
</dbReference>
<dbReference type="InterPro" id="IPR013766">
    <property type="entry name" value="Thioredoxin_domain"/>
</dbReference>
<dbReference type="InterPro" id="IPR002065">
    <property type="entry name" value="TPX"/>
</dbReference>
<dbReference type="InterPro" id="IPR018219">
    <property type="entry name" value="Tpx_CS"/>
</dbReference>
<dbReference type="InterPro" id="IPR050455">
    <property type="entry name" value="Tpx_Peroxidase_subfamily"/>
</dbReference>
<dbReference type="NCBIfam" id="NF001808">
    <property type="entry name" value="PRK00522.1"/>
    <property type="match status" value="1"/>
</dbReference>
<dbReference type="PANTHER" id="PTHR43110">
    <property type="entry name" value="THIOL PEROXIDASE"/>
    <property type="match status" value="1"/>
</dbReference>
<dbReference type="PANTHER" id="PTHR43110:SF1">
    <property type="entry name" value="THIOL PEROXIDASE"/>
    <property type="match status" value="1"/>
</dbReference>
<dbReference type="Pfam" id="PF08534">
    <property type="entry name" value="Redoxin"/>
    <property type="match status" value="1"/>
</dbReference>
<dbReference type="SUPFAM" id="SSF52833">
    <property type="entry name" value="Thioredoxin-like"/>
    <property type="match status" value="1"/>
</dbReference>
<dbReference type="PROSITE" id="PS51352">
    <property type="entry name" value="THIOREDOXIN_2"/>
    <property type="match status" value="1"/>
</dbReference>
<dbReference type="PROSITE" id="PS01265">
    <property type="entry name" value="TPX"/>
    <property type="match status" value="1"/>
</dbReference>
<organism>
    <name type="scientific">Listeria monocytogenes serotype 4b (strain F2365)</name>
    <dbReference type="NCBI Taxonomy" id="265669"/>
    <lineage>
        <taxon>Bacteria</taxon>
        <taxon>Bacillati</taxon>
        <taxon>Bacillota</taxon>
        <taxon>Bacilli</taxon>
        <taxon>Bacillales</taxon>
        <taxon>Listeriaceae</taxon>
        <taxon>Listeria</taxon>
    </lineage>
</organism>
<evidence type="ECO:0000255" key="1">
    <source>
        <dbReference type="HAMAP-Rule" id="MF_00269"/>
    </source>
</evidence>
<protein>
    <recommendedName>
        <fullName evidence="1">Thiol peroxidase</fullName>
        <shortName evidence="1">Tpx</shortName>
        <ecNumber evidence="1">1.11.1.24</ecNumber>
    </recommendedName>
    <alternativeName>
        <fullName evidence="1">Peroxiredoxin tpx</fullName>
        <shortName evidence="1">Prx</shortName>
    </alternativeName>
    <alternativeName>
        <fullName evidence="1">Thioredoxin peroxidase</fullName>
    </alternativeName>
    <alternativeName>
        <fullName evidence="1">Thioredoxin-dependent peroxiredoxin</fullName>
    </alternativeName>
</protein>
<proteinExistence type="inferred from homology"/>
<accession>Q71Z84</accession>
<comment type="function">
    <text evidence="1">Thiol-specific peroxidase that catalyzes the reduction of hydrogen peroxide and organic hydroperoxides to water and alcohols, respectively. Plays a role in cell protection against oxidative stress by detoxifying peroxides.</text>
</comment>
<comment type="catalytic activity">
    <reaction evidence="1">
        <text>a hydroperoxide + [thioredoxin]-dithiol = an alcohol + [thioredoxin]-disulfide + H2O</text>
        <dbReference type="Rhea" id="RHEA:62620"/>
        <dbReference type="Rhea" id="RHEA-COMP:10698"/>
        <dbReference type="Rhea" id="RHEA-COMP:10700"/>
        <dbReference type="ChEBI" id="CHEBI:15377"/>
        <dbReference type="ChEBI" id="CHEBI:29950"/>
        <dbReference type="ChEBI" id="CHEBI:30879"/>
        <dbReference type="ChEBI" id="CHEBI:35924"/>
        <dbReference type="ChEBI" id="CHEBI:50058"/>
        <dbReference type="EC" id="1.11.1.24"/>
    </reaction>
</comment>
<comment type="subunit">
    <text evidence="1">Homodimer.</text>
</comment>
<comment type="miscellaneous">
    <text evidence="1">The active site is a conserved redox-active cysteine residue, the peroxidatic cysteine (C(P)), which makes the nucleophilic attack on the peroxide substrate. The peroxide oxidizes the C(P)-SH to cysteine sulfenic acid (C(P)-SOH), which then reacts with another cysteine residue, the resolving cysteine (C(R)), to form a disulfide bridge. The disulfide is subsequently reduced by an appropriate electron donor to complete the catalytic cycle. In this atypical 2-Cys peroxiredoxin, C(R) is present in the same subunit to form an intramolecular disulfide. The disulfide is subsequently reduced by thioredoxin.</text>
</comment>
<comment type="similarity">
    <text evidence="1">Belongs to the peroxiredoxin family. Tpx subfamily.</text>
</comment>